<name>FUMA_SALTY</name>
<dbReference type="EC" id="4.2.1.2" evidence="2"/>
<dbReference type="EC" id="5.3.2.2" evidence="2"/>
<dbReference type="EMBL" id="AE006468">
    <property type="protein sequence ID" value="AAL20388.1"/>
    <property type="molecule type" value="Genomic_DNA"/>
</dbReference>
<dbReference type="EMBL" id="X57117">
    <property type="status" value="NOT_ANNOTATED_CDS"/>
    <property type="molecule type" value="Genomic_DNA"/>
</dbReference>
<dbReference type="RefSeq" id="NP_460429.2">
    <property type="nucleotide sequence ID" value="NC_003197.2"/>
</dbReference>
<dbReference type="SMR" id="P40720"/>
<dbReference type="STRING" id="99287.STM1468"/>
<dbReference type="PaxDb" id="99287-STM1468"/>
<dbReference type="GeneID" id="1252986"/>
<dbReference type="KEGG" id="stm:STM1468"/>
<dbReference type="PATRIC" id="fig|99287.12.peg.1550"/>
<dbReference type="HOGENOM" id="CLU_026758_0_0_6"/>
<dbReference type="PhylomeDB" id="P40720"/>
<dbReference type="UniPathway" id="UPA00223">
    <property type="reaction ID" value="UER01007"/>
</dbReference>
<dbReference type="PHI-base" id="PHI:10046"/>
<dbReference type="Proteomes" id="UP000001014">
    <property type="component" value="Chromosome"/>
</dbReference>
<dbReference type="GO" id="GO:0005829">
    <property type="term" value="C:cytosol"/>
    <property type="evidence" value="ECO:0000318"/>
    <property type="project" value="GO_Central"/>
</dbReference>
<dbReference type="GO" id="GO:0051539">
    <property type="term" value="F:4 iron, 4 sulfur cluster binding"/>
    <property type="evidence" value="ECO:0007669"/>
    <property type="project" value="UniProtKB-KW"/>
</dbReference>
<dbReference type="GO" id="GO:0004333">
    <property type="term" value="F:fumarate hydratase activity"/>
    <property type="evidence" value="ECO:0000318"/>
    <property type="project" value="GO_Central"/>
</dbReference>
<dbReference type="GO" id="GO:0046872">
    <property type="term" value="F:metal ion binding"/>
    <property type="evidence" value="ECO:0007669"/>
    <property type="project" value="UniProtKB-KW"/>
</dbReference>
<dbReference type="GO" id="GO:0050163">
    <property type="term" value="F:oxaloacetate tautomerase activity"/>
    <property type="evidence" value="ECO:0007669"/>
    <property type="project" value="UniProtKB-EC"/>
</dbReference>
<dbReference type="GO" id="GO:0006099">
    <property type="term" value="P:tricarboxylic acid cycle"/>
    <property type="evidence" value="ECO:0000318"/>
    <property type="project" value="GO_Central"/>
</dbReference>
<dbReference type="FunFam" id="3.20.130.10:FF:000001">
    <property type="entry name" value="Fumarate hydratase class I"/>
    <property type="match status" value="1"/>
</dbReference>
<dbReference type="Gene3D" id="3.20.130.10">
    <property type="entry name" value="Fe-S hydro-lyase, tartrate dehydratase beta-type, catalytic domain"/>
    <property type="match status" value="1"/>
</dbReference>
<dbReference type="InterPro" id="IPR051208">
    <property type="entry name" value="Class-I_Fumarase/Tartrate_DH"/>
</dbReference>
<dbReference type="InterPro" id="IPR004646">
    <property type="entry name" value="Fe-S_hydro-lyase_TtdA-typ_cat"/>
</dbReference>
<dbReference type="InterPro" id="IPR004647">
    <property type="entry name" value="Fe-S_hydro-lyase_TtdB-typ_cat"/>
</dbReference>
<dbReference type="InterPro" id="IPR036660">
    <property type="entry name" value="Fe-S_hydroAse_TtdB_cat_sf"/>
</dbReference>
<dbReference type="InterPro" id="IPR011167">
    <property type="entry name" value="Fe_dep_fumarate_hydratase"/>
</dbReference>
<dbReference type="InterPro" id="IPR020557">
    <property type="entry name" value="Fumarate_lyase_CS"/>
</dbReference>
<dbReference type="NCBIfam" id="NF011919">
    <property type="entry name" value="PRK15390.1"/>
    <property type="match status" value="1"/>
</dbReference>
<dbReference type="NCBIfam" id="NF011920">
    <property type="entry name" value="PRK15391.1"/>
    <property type="match status" value="1"/>
</dbReference>
<dbReference type="NCBIfam" id="TIGR00722">
    <property type="entry name" value="ttdA_fumA_fumB"/>
    <property type="match status" value="1"/>
</dbReference>
<dbReference type="NCBIfam" id="TIGR00723">
    <property type="entry name" value="ttdB_fumA_fumB"/>
    <property type="match status" value="1"/>
</dbReference>
<dbReference type="PANTHER" id="PTHR30389:SF0">
    <property type="entry name" value="FUMARATE HYDRATASE CLASS I, AEROBIC"/>
    <property type="match status" value="1"/>
</dbReference>
<dbReference type="PANTHER" id="PTHR30389">
    <property type="entry name" value="FUMARATE HYDRATASE-RELATED"/>
    <property type="match status" value="1"/>
</dbReference>
<dbReference type="Pfam" id="PF05681">
    <property type="entry name" value="Fumerase"/>
    <property type="match status" value="1"/>
</dbReference>
<dbReference type="Pfam" id="PF05683">
    <property type="entry name" value="Fumerase_C"/>
    <property type="match status" value="1"/>
</dbReference>
<dbReference type="PIRSF" id="PIRSF001394">
    <property type="entry name" value="Fe_dep_fumar_hy"/>
    <property type="match status" value="1"/>
</dbReference>
<dbReference type="SUPFAM" id="SSF117457">
    <property type="entry name" value="FumA C-terminal domain-like"/>
    <property type="match status" value="1"/>
</dbReference>
<dbReference type="PROSITE" id="PS00163">
    <property type="entry name" value="FUMARATE_LYASES"/>
    <property type="match status" value="1"/>
</dbReference>
<accession>P40720</accession>
<feature type="chain" id="PRO_0000195659" description="Fumarate hydratase class I, aerobic">
    <location>
        <begin position="1"/>
        <end position="580"/>
    </location>
</feature>
<feature type="binding site" evidence="1">
    <location>
        <position position="105"/>
    </location>
    <ligand>
        <name>[4Fe-4S] cluster</name>
        <dbReference type="ChEBI" id="CHEBI:49883"/>
    </ligand>
</feature>
<feature type="binding site" evidence="1">
    <location>
        <position position="224"/>
    </location>
    <ligand>
        <name>[4Fe-4S] cluster</name>
        <dbReference type="ChEBI" id="CHEBI:49883"/>
    </ligand>
</feature>
<feature type="binding site" evidence="1">
    <location>
        <position position="318"/>
    </location>
    <ligand>
        <name>[4Fe-4S] cluster</name>
        <dbReference type="ChEBI" id="CHEBI:49883"/>
    </ligand>
</feature>
<evidence type="ECO:0000250" key="1">
    <source>
        <dbReference type="UniProtKB" id="E9AE57"/>
    </source>
</evidence>
<evidence type="ECO:0000250" key="2">
    <source>
        <dbReference type="UniProtKB" id="P0AC33"/>
    </source>
</evidence>
<evidence type="ECO:0000305" key="3"/>
<keyword id="KW-0004">4Fe-4S</keyword>
<keyword id="KW-0408">Iron</keyword>
<keyword id="KW-0411">Iron-sulfur</keyword>
<keyword id="KW-0413">Isomerase</keyword>
<keyword id="KW-0456">Lyase</keyword>
<keyword id="KW-0479">Metal-binding</keyword>
<keyword id="KW-1185">Reference proteome</keyword>
<keyword id="KW-0816">Tricarboxylic acid cycle</keyword>
<proteinExistence type="inferred from homology"/>
<organism>
    <name type="scientific">Salmonella typhimurium (strain LT2 / SGSC1412 / ATCC 700720)</name>
    <dbReference type="NCBI Taxonomy" id="99287"/>
    <lineage>
        <taxon>Bacteria</taxon>
        <taxon>Pseudomonadati</taxon>
        <taxon>Pseudomonadota</taxon>
        <taxon>Gammaproteobacteria</taxon>
        <taxon>Enterobacterales</taxon>
        <taxon>Enterobacteriaceae</taxon>
        <taxon>Salmonella</taxon>
    </lineage>
</organism>
<reference key="1">
    <citation type="journal article" date="2001" name="Nature">
        <title>Complete genome sequence of Salmonella enterica serovar Typhimurium LT2.</title>
        <authorList>
            <person name="McClelland M."/>
            <person name="Sanderson K.E."/>
            <person name="Spieth J."/>
            <person name="Clifton S.W."/>
            <person name="Latreille P."/>
            <person name="Courtney L."/>
            <person name="Porwollik S."/>
            <person name="Ali J."/>
            <person name="Dante M."/>
            <person name="Du F."/>
            <person name="Hou S."/>
            <person name="Layman D."/>
            <person name="Leonard S."/>
            <person name="Nguyen C."/>
            <person name="Scott K."/>
            <person name="Holmes A."/>
            <person name="Grewal N."/>
            <person name="Mulvaney E."/>
            <person name="Ryan E."/>
            <person name="Sun H."/>
            <person name="Florea L."/>
            <person name="Miller W."/>
            <person name="Stoneking T."/>
            <person name="Nhan M."/>
            <person name="Waterston R."/>
            <person name="Wilson R.K."/>
        </authorList>
    </citation>
    <scope>NUCLEOTIDE SEQUENCE [LARGE SCALE GENOMIC DNA]</scope>
    <source>
        <strain>LT2 / SGSC1412 / ATCC 700720</strain>
    </source>
</reference>
<reference key="2">
    <citation type="journal article" date="1991" name="Gene">
        <title>Sequence of the phosphomannose isomerase-encoding gene of Salmonella typhimurium.</title>
        <authorList>
            <person name="Collins L.V."/>
            <person name="Hackett J."/>
        </authorList>
    </citation>
    <scope>NUCLEOTIDE SEQUENCE [GENOMIC DNA] OF 1-39</scope>
    <source>
        <strain>C5</strain>
    </source>
</reference>
<sequence>MSNKPFFYQDPFPLKKDDTEYYLLTSEHVSVAEFEGQEILKVAPEALTLLARQAFHDASFMLRPAHQQQVADILRDPQASENDKYVALQFLRNSDIAAKGVLPTCQDTGTAIIVGKKGQRVWTGGGDEAALARGVYNTYIEDNLRYSQNAALDMYKEVNTGTNLPAQIDLYSVDGDEYKFLCIAKGGGSANKTYLYQETKALLTPGKLKNYLVDKMRTLGTAACPPYHIAFVIGGTSAEANLKTVKLASAKYYDALPTEGNEHGQAFRDIELEKELLLEAQNLGLGAQFGGKYFAHDIRVIRLPRHGASCPVGMGVSCSADRNIKAKINRDGIWIEKLERNPGKYIPEALRQAGEGEAVRVDLNRPMSEILQQLSQYPVSTRLSLNGTIIVGRDIAHAKLKERMDRGEGLPQYIKDHPIYYAGPAKTPEGYASGSLGPTTAGRMDSYVDQLQSQGGSMIMLAKGNRSQQVTDACKKHGGFYLGSIGGPAAVLAQGSIKRLECVEYPELGMEAIWKIEVEDFPAFILVDDKGNDFFQQIQSSQCGAALSNVAALRGGNMIRYFAGERRKRLIRSTPLCCYR</sequence>
<protein>
    <recommendedName>
        <fullName evidence="2">Fumarate hydratase class I, aerobic</fullName>
        <ecNumber evidence="2">4.2.1.2</ecNumber>
    </recommendedName>
    <alternativeName>
        <fullName evidence="2">Fumarase A</fullName>
    </alternativeName>
    <alternativeName>
        <fullName evidence="2">Oxaloacetate keto--enol-isomerase</fullName>
        <shortName evidence="2">OAAKE isomerase</shortName>
    </alternativeName>
    <alternativeName>
        <fullName evidence="2">Oxaloacetate tautomerase</fullName>
        <ecNumber evidence="2">5.3.2.2</ecNumber>
    </alternativeName>
</protein>
<comment type="function">
    <text evidence="2">Catalyzes the reversible hydration of fumarate to (S)-malate. Functions as an aerobic enzyme in the direction of malate formation as part of the citric acid cycle. Accounts for about 80% of the fumarase activity when the bacteria grow aerobically. To a lesser extent, also displays D-tartrate dehydratase activity in vitro, but is not able to convert (R)-malate, L-tartrate or meso-tartrate. Can also catalyze the isomerization of enol- to keto-oxaloacetate.</text>
</comment>
<comment type="catalytic activity">
    <reaction evidence="2">
        <text>(S)-malate = fumarate + H2O</text>
        <dbReference type="Rhea" id="RHEA:12460"/>
        <dbReference type="ChEBI" id="CHEBI:15377"/>
        <dbReference type="ChEBI" id="CHEBI:15589"/>
        <dbReference type="ChEBI" id="CHEBI:29806"/>
        <dbReference type="EC" id="4.2.1.2"/>
    </reaction>
</comment>
<comment type="catalytic activity">
    <reaction evidence="2">
        <text>oxaloacetate = enol-oxaloacetate</text>
        <dbReference type="Rhea" id="RHEA:16021"/>
        <dbReference type="ChEBI" id="CHEBI:16452"/>
        <dbReference type="ChEBI" id="CHEBI:17479"/>
        <dbReference type="EC" id="5.3.2.2"/>
    </reaction>
</comment>
<comment type="cofactor">
    <cofactor evidence="2">
        <name>[4Fe-4S] cluster</name>
        <dbReference type="ChEBI" id="CHEBI:49883"/>
    </cofactor>
    <text evidence="2">Binds 1 [4Fe-4S] cluster per subunit.</text>
</comment>
<comment type="pathway">
    <text evidence="2">Carbohydrate metabolism; tricarboxylic acid cycle; (S)-malate from fumarate: step 1/1.</text>
</comment>
<comment type="subunit">
    <text evidence="2">Homodimer.</text>
</comment>
<comment type="induction">
    <text evidence="2">Is expressed under aerobic conditions. Is repressed by glucose and anaerobiosis.</text>
</comment>
<comment type="similarity">
    <text evidence="3">Belongs to the class-I fumarase family.</text>
</comment>
<gene>
    <name evidence="2" type="primary">fumA</name>
    <name type="ordered locus">STM1468</name>
</gene>